<feature type="signal peptide" evidence="1">
    <location>
        <begin position="1"/>
        <end position="28"/>
    </location>
</feature>
<feature type="chain" id="PRO_5000101192" description="Photosystem II extrinsic protein U">
    <location>
        <begin position="29"/>
        <end position="136"/>
    </location>
</feature>
<proteinExistence type="inferred from homology"/>
<evidence type="ECO:0000255" key="1">
    <source>
        <dbReference type="HAMAP-Rule" id="MF_00589"/>
    </source>
</evidence>
<reference key="1">
    <citation type="submission" date="2005-08" db="EMBL/GenBank/DDBJ databases">
        <title>Complete sequence of chromosome 1 of Synechococcus elongatus PCC 7942.</title>
        <authorList>
            <consortium name="US DOE Joint Genome Institute"/>
            <person name="Copeland A."/>
            <person name="Lucas S."/>
            <person name="Lapidus A."/>
            <person name="Barry K."/>
            <person name="Detter J.C."/>
            <person name="Glavina T."/>
            <person name="Hammon N."/>
            <person name="Israni S."/>
            <person name="Pitluck S."/>
            <person name="Schmutz J."/>
            <person name="Larimer F."/>
            <person name="Land M."/>
            <person name="Kyrpides N."/>
            <person name="Lykidis A."/>
            <person name="Golden S."/>
            <person name="Richardson P."/>
        </authorList>
    </citation>
    <scope>NUCLEOTIDE SEQUENCE [LARGE SCALE GENOMIC DNA]</scope>
    <source>
        <strain>ATCC 33912 / PCC 7942 / FACHB-805</strain>
    </source>
</reference>
<accession>Q31M07</accession>
<comment type="function">
    <text evidence="1">One of the extrinsic, lumenal subunits of photosystem II (PSII). PSII is a light-driven water plastoquinone oxidoreductase, using light energy to abstract electrons from H(2)O, generating a proton gradient subsequently used for ATP formation. The extrinsic proteins stabilize the structure of photosystem II oxygen-evolving complex (OEC), the ion environment of oxygen evolution and protect the OEC against heat-induced inactivation.</text>
</comment>
<comment type="subunit">
    <text evidence="1">PSII is composed of 1 copy each of membrane proteins PsbA, PsbB, PsbC, PsbD, PsbE, PsbF, PsbH, PsbI, PsbJ, PsbK, PsbL, PsbM, PsbT, PsbX, PsbY, PsbZ, Psb30/Ycf12, peripheral proteins PsbO, CyanoQ (PsbQ), PsbU, PsbV and a large number of cofactors. It forms dimeric complexes.</text>
</comment>
<comment type="subcellular location">
    <subcellularLocation>
        <location evidence="1">Cellular thylakoid membrane</location>
        <topology evidence="1">Peripheral membrane protein</topology>
        <orientation evidence="1">Lumenal side</orientation>
    </subcellularLocation>
</comment>
<comment type="similarity">
    <text evidence="1">Belongs to the PsbU family.</text>
</comment>
<organism>
    <name type="scientific">Synechococcus elongatus (strain ATCC 33912 / PCC 7942 / FACHB-805)</name>
    <name type="common">Anacystis nidulans R2</name>
    <dbReference type="NCBI Taxonomy" id="1140"/>
    <lineage>
        <taxon>Bacteria</taxon>
        <taxon>Bacillati</taxon>
        <taxon>Cyanobacteriota</taxon>
        <taxon>Cyanophyceae</taxon>
        <taxon>Synechococcales</taxon>
        <taxon>Synechococcaceae</taxon>
        <taxon>Synechococcus</taxon>
    </lineage>
</organism>
<sequence length="136" mass="15066">MKQLAQRLFSLALVLALVLGISVQSAQALSLQSPLLAVAEAEIRNEADAQRIEAGGKLDLNNIGVRAFQQFPGMYPYLASKIVLGGPYDSVDDVLKLDLSDRQREVFEQYKENFTVTPPRDALNEGDDRINNGIYR</sequence>
<name>PSBU_SYNE7</name>
<protein>
    <recommendedName>
        <fullName evidence="1">Photosystem II extrinsic protein U</fullName>
        <shortName evidence="1">PSII-U</shortName>
        <shortName evidence="1">PsbU</shortName>
    </recommendedName>
    <alternativeName>
        <fullName evidence="1">Photosystem II 12 kDa extrinsic protein</fullName>
        <shortName evidence="1">PS II complex 12 kDa extrinsic protein</shortName>
    </alternativeName>
</protein>
<gene>
    <name evidence="1" type="primary">psbU</name>
    <name type="ordered locus">Synpcc7942_1882</name>
</gene>
<dbReference type="EMBL" id="CP000100">
    <property type="protein sequence ID" value="ABB57912.1"/>
    <property type="molecule type" value="Genomic_DNA"/>
</dbReference>
<dbReference type="RefSeq" id="WP_011244523.1">
    <property type="nucleotide sequence ID" value="NZ_JACJTX010000001.1"/>
</dbReference>
<dbReference type="SMR" id="Q31M07"/>
<dbReference type="STRING" id="1140.Synpcc7942_1882"/>
<dbReference type="PaxDb" id="1140-Synpcc7942_1882"/>
<dbReference type="GeneID" id="72430754"/>
<dbReference type="KEGG" id="syf:Synpcc7942_1882"/>
<dbReference type="eggNOG" id="COG1555">
    <property type="taxonomic scope" value="Bacteria"/>
</dbReference>
<dbReference type="HOGENOM" id="CLU_141240_1_0_3"/>
<dbReference type="OrthoDB" id="463369at2"/>
<dbReference type="BioCyc" id="MetaCyc:SYNPCC7942_1882-MONOMER"/>
<dbReference type="BioCyc" id="SYNEL:SYNPCC7942_1882-MONOMER"/>
<dbReference type="Proteomes" id="UP000889800">
    <property type="component" value="Chromosome"/>
</dbReference>
<dbReference type="GO" id="GO:0019898">
    <property type="term" value="C:extrinsic component of membrane"/>
    <property type="evidence" value="ECO:0007669"/>
    <property type="project" value="InterPro"/>
</dbReference>
<dbReference type="GO" id="GO:0009654">
    <property type="term" value="C:photosystem II oxygen evolving complex"/>
    <property type="evidence" value="ECO:0007669"/>
    <property type="project" value="InterPro"/>
</dbReference>
<dbReference type="GO" id="GO:0031676">
    <property type="term" value="C:plasma membrane-derived thylakoid membrane"/>
    <property type="evidence" value="ECO:0007669"/>
    <property type="project" value="UniProtKB-SubCell"/>
</dbReference>
<dbReference type="GO" id="GO:0015979">
    <property type="term" value="P:photosynthesis"/>
    <property type="evidence" value="ECO:0007669"/>
    <property type="project" value="UniProtKB-UniRule"/>
</dbReference>
<dbReference type="GO" id="GO:0042549">
    <property type="term" value="P:photosystem II stabilization"/>
    <property type="evidence" value="ECO:0007669"/>
    <property type="project" value="InterPro"/>
</dbReference>
<dbReference type="Gene3D" id="1.10.150.320">
    <property type="entry name" value="Photosystem II 12 kDa extrinsic protein"/>
    <property type="match status" value="1"/>
</dbReference>
<dbReference type="HAMAP" id="MF_00589">
    <property type="entry name" value="PSII_PsbU"/>
    <property type="match status" value="1"/>
</dbReference>
<dbReference type="InterPro" id="IPR010527">
    <property type="entry name" value="PSII_PsbU"/>
</dbReference>
<dbReference type="NCBIfam" id="NF002708">
    <property type="entry name" value="PRK02515.1"/>
    <property type="match status" value="1"/>
</dbReference>
<dbReference type="Pfam" id="PF06514">
    <property type="entry name" value="PsbU"/>
    <property type="match status" value="1"/>
</dbReference>
<dbReference type="SUPFAM" id="SSF81585">
    <property type="entry name" value="PsbU/PolX domain-like"/>
    <property type="match status" value="1"/>
</dbReference>
<keyword id="KW-0249">Electron transport</keyword>
<keyword id="KW-0472">Membrane</keyword>
<keyword id="KW-0602">Photosynthesis</keyword>
<keyword id="KW-0604">Photosystem II</keyword>
<keyword id="KW-1185">Reference proteome</keyword>
<keyword id="KW-0732">Signal</keyword>
<keyword id="KW-0793">Thylakoid</keyword>
<keyword id="KW-0813">Transport</keyword>